<protein>
    <recommendedName>
        <fullName evidence="1">5-methyltetrahydropteroyltriglutamate--homocysteine methyltransferase</fullName>
        <ecNumber evidence="1">2.1.1.14</ecNumber>
    </recommendedName>
    <alternativeName>
        <fullName evidence="1">Cobalamin-independent methionine synthase</fullName>
    </alternativeName>
    <alternativeName>
        <fullName evidence="1">Methionine synthase, vitamin-B12 independent isozyme</fullName>
    </alternativeName>
</protein>
<name>METE_PSESM</name>
<reference key="1">
    <citation type="journal article" date="2003" name="Proc. Natl. Acad. Sci. U.S.A.">
        <title>The complete genome sequence of the Arabidopsis and tomato pathogen Pseudomonas syringae pv. tomato DC3000.</title>
        <authorList>
            <person name="Buell C.R."/>
            <person name="Joardar V."/>
            <person name="Lindeberg M."/>
            <person name="Selengut J."/>
            <person name="Paulsen I.T."/>
            <person name="Gwinn M.L."/>
            <person name="Dodson R.J."/>
            <person name="DeBoy R.T."/>
            <person name="Durkin A.S."/>
            <person name="Kolonay J.F."/>
            <person name="Madupu R."/>
            <person name="Daugherty S.C."/>
            <person name="Brinkac L.M."/>
            <person name="Beanan M.J."/>
            <person name="Haft D.H."/>
            <person name="Nelson W.C."/>
            <person name="Davidsen T.M."/>
            <person name="Zafar N."/>
            <person name="Zhou L."/>
            <person name="Liu J."/>
            <person name="Yuan Q."/>
            <person name="Khouri H.M."/>
            <person name="Fedorova N.B."/>
            <person name="Tran B."/>
            <person name="Russell D."/>
            <person name="Berry K.J."/>
            <person name="Utterback T.R."/>
            <person name="Van Aken S.E."/>
            <person name="Feldblyum T.V."/>
            <person name="D'Ascenzo M."/>
            <person name="Deng W.-L."/>
            <person name="Ramos A.R."/>
            <person name="Alfano J.R."/>
            <person name="Cartinhour S."/>
            <person name="Chatterjee A.K."/>
            <person name="Delaney T.P."/>
            <person name="Lazarowitz S.G."/>
            <person name="Martin G.B."/>
            <person name="Schneider D.J."/>
            <person name="Tang X."/>
            <person name="Bender C.L."/>
            <person name="White O."/>
            <person name="Fraser C.M."/>
            <person name="Collmer A."/>
        </authorList>
    </citation>
    <scope>NUCLEOTIDE SEQUENCE [LARGE SCALE GENOMIC DNA]</scope>
    <source>
        <strain>ATCC BAA-871 / DC3000</strain>
    </source>
</reference>
<proteinExistence type="inferred from homology"/>
<dbReference type="EC" id="2.1.1.14" evidence="1"/>
<dbReference type="EMBL" id="AE016853">
    <property type="protein sequence ID" value="AAO57635.1"/>
    <property type="molecule type" value="Genomic_DNA"/>
</dbReference>
<dbReference type="RefSeq" id="NP_793940.1">
    <property type="nucleotide sequence ID" value="NC_004578.1"/>
</dbReference>
<dbReference type="RefSeq" id="WP_005764814.1">
    <property type="nucleotide sequence ID" value="NC_004578.1"/>
</dbReference>
<dbReference type="SMR" id="Q87XJ9"/>
<dbReference type="STRING" id="223283.PSPTO_4179"/>
<dbReference type="GeneID" id="1185859"/>
<dbReference type="KEGG" id="pst:PSPTO_4179"/>
<dbReference type="PATRIC" id="fig|223283.9.peg.4289"/>
<dbReference type="eggNOG" id="COG0620">
    <property type="taxonomic scope" value="Bacteria"/>
</dbReference>
<dbReference type="HOGENOM" id="CLU_013175_0_0_6"/>
<dbReference type="OrthoDB" id="244285at2"/>
<dbReference type="PhylomeDB" id="Q87XJ9"/>
<dbReference type="UniPathway" id="UPA00051">
    <property type="reaction ID" value="UER00082"/>
</dbReference>
<dbReference type="Proteomes" id="UP000002515">
    <property type="component" value="Chromosome"/>
</dbReference>
<dbReference type="GO" id="GO:0003871">
    <property type="term" value="F:5-methyltetrahydropteroyltriglutamate-homocysteine S-methyltransferase activity"/>
    <property type="evidence" value="ECO:0007669"/>
    <property type="project" value="UniProtKB-UniRule"/>
</dbReference>
<dbReference type="GO" id="GO:0008270">
    <property type="term" value="F:zinc ion binding"/>
    <property type="evidence" value="ECO:0007669"/>
    <property type="project" value="InterPro"/>
</dbReference>
<dbReference type="GO" id="GO:0009086">
    <property type="term" value="P:methionine biosynthetic process"/>
    <property type="evidence" value="ECO:0007669"/>
    <property type="project" value="UniProtKB-UniRule"/>
</dbReference>
<dbReference type="GO" id="GO:0032259">
    <property type="term" value="P:methylation"/>
    <property type="evidence" value="ECO:0007669"/>
    <property type="project" value="UniProtKB-KW"/>
</dbReference>
<dbReference type="CDD" id="cd03311">
    <property type="entry name" value="CIMS_C_terminal_like"/>
    <property type="match status" value="1"/>
</dbReference>
<dbReference type="CDD" id="cd03312">
    <property type="entry name" value="CIMS_N_terminal_like"/>
    <property type="match status" value="1"/>
</dbReference>
<dbReference type="FunFam" id="3.20.20.210:FF:000002">
    <property type="entry name" value="5-methyltetrahydropteroyltriglutamate--homocysteine methyltransferase"/>
    <property type="match status" value="1"/>
</dbReference>
<dbReference type="FunFam" id="3.20.20.210:FF:000003">
    <property type="entry name" value="5-methyltetrahydropteroyltriglutamate--homocysteine methyltransferase"/>
    <property type="match status" value="1"/>
</dbReference>
<dbReference type="Gene3D" id="3.20.20.210">
    <property type="match status" value="2"/>
</dbReference>
<dbReference type="HAMAP" id="MF_00172">
    <property type="entry name" value="Meth_synth"/>
    <property type="match status" value="1"/>
</dbReference>
<dbReference type="InterPro" id="IPR013215">
    <property type="entry name" value="Cbl-indep_Met_Synth_N"/>
</dbReference>
<dbReference type="InterPro" id="IPR006276">
    <property type="entry name" value="Cobalamin-indep_Met_synthase"/>
</dbReference>
<dbReference type="InterPro" id="IPR002629">
    <property type="entry name" value="Met_Synth_C/arc"/>
</dbReference>
<dbReference type="InterPro" id="IPR038071">
    <property type="entry name" value="UROD/MetE-like_sf"/>
</dbReference>
<dbReference type="NCBIfam" id="TIGR01371">
    <property type="entry name" value="met_syn_B12ind"/>
    <property type="match status" value="1"/>
</dbReference>
<dbReference type="NCBIfam" id="NF003556">
    <property type="entry name" value="PRK05222.1"/>
    <property type="match status" value="1"/>
</dbReference>
<dbReference type="PANTHER" id="PTHR30519">
    <property type="entry name" value="5-METHYLTETRAHYDROPTEROYLTRIGLUTAMATE--HOMOCYSTEINE METHYLTRANSFERASE"/>
    <property type="match status" value="1"/>
</dbReference>
<dbReference type="Pfam" id="PF08267">
    <property type="entry name" value="Meth_synt_1"/>
    <property type="match status" value="1"/>
</dbReference>
<dbReference type="Pfam" id="PF01717">
    <property type="entry name" value="Meth_synt_2"/>
    <property type="match status" value="1"/>
</dbReference>
<dbReference type="PIRSF" id="PIRSF000382">
    <property type="entry name" value="MeTrfase_B12_ind"/>
    <property type="match status" value="1"/>
</dbReference>
<dbReference type="SUPFAM" id="SSF51726">
    <property type="entry name" value="UROD/MetE-like"/>
    <property type="match status" value="2"/>
</dbReference>
<sequence>MALAHNLGFPRIGADRELKKALEAYWKGDLDQTGLRAVGQQLRAAHWQVQKEAGIELLPVGDFAWYDQVLTHSLTLGVIPERFSPAQDAAGLPTLDTLFAMARGASNCCGASHGKTQHAQELTKWFDTNYHYLVPEFTQDQRFQLSWEQLFEEVDEAHALGHKVKPVLIGPLTYLWLGKAKGDSFDRLELLDRLLPVYGEILGRLAAQGVEWVQFDEPVLTLDLPQDWKTAFERAYHSLQYSPLKKLVATYFGGLEDNLGLAATLPVDGLHIDLVRAPEQLPAVLDRLPSYKVLSLGVVNGRNVWRCDLDNALAALQQAHARFGDNLWVAGSCSLLHSPVDLNREDRLDPELKGWLAFAVQKSREIAILSHALNDPEATEVVEALAQSCEIQASRAQSSRVHNPQVQARLASVTAADHQRRSAFAERITVQRERLKLPAFPTTTIGSFPQTSAIRLARQAHKQGKLSLNDYTDAMRHEIRHAVQVQENLGLDVLVHGEAERNDMVEYFAEQLDGYLFTRFGWVQSYGSRCVKPAIIFGDLSRPQPMTVDWIRYAQSLTDKTMKGMLTGPVTMLMWSFSREDVSRQVQAQQLALAIRDEVLDLERAGIKIVQIDEAAFREGLPLRKAQWQQYLDWAVAAFRLCASGVRDETQIHTHMCYSEFNDVIKSIAAMDADVITIETSRSDMELLDAFEAFDYPNDIGPGVYDIHSPRVPETAEMVSLIAKAARRIPAERLWVNPDCGLKTRGWPETEAALINMVAAARQLRL</sequence>
<organism>
    <name type="scientific">Pseudomonas syringae pv. tomato (strain ATCC BAA-871 / DC3000)</name>
    <dbReference type="NCBI Taxonomy" id="223283"/>
    <lineage>
        <taxon>Bacteria</taxon>
        <taxon>Pseudomonadati</taxon>
        <taxon>Pseudomonadota</taxon>
        <taxon>Gammaproteobacteria</taxon>
        <taxon>Pseudomonadales</taxon>
        <taxon>Pseudomonadaceae</taxon>
        <taxon>Pseudomonas</taxon>
    </lineage>
</organism>
<accession>Q87XJ9</accession>
<feature type="chain" id="PRO_0000098650" description="5-methyltetrahydropteroyltriglutamate--homocysteine methyltransferase">
    <location>
        <begin position="1"/>
        <end position="766"/>
    </location>
</feature>
<feature type="active site" description="Proton donor" evidence="1">
    <location>
        <position position="708"/>
    </location>
</feature>
<feature type="binding site" evidence="1">
    <location>
        <begin position="16"/>
        <end position="19"/>
    </location>
    <ligand>
        <name>5-methyltetrahydropteroyltri-L-glutamate</name>
        <dbReference type="ChEBI" id="CHEBI:58207"/>
    </ligand>
</feature>
<feature type="binding site" evidence="1">
    <location>
        <position position="124"/>
    </location>
    <ligand>
        <name>5-methyltetrahydropteroyltri-L-glutamate</name>
        <dbReference type="ChEBI" id="CHEBI:58207"/>
    </ligand>
</feature>
<feature type="binding site" evidence="1">
    <location>
        <begin position="445"/>
        <end position="447"/>
    </location>
    <ligand>
        <name>L-homocysteine</name>
        <dbReference type="ChEBI" id="CHEBI:58199"/>
    </ligand>
</feature>
<feature type="binding site" evidence="1">
    <location>
        <begin position="445"/>
        <end position="447"/>
    </location>
    <ligand>
        <name>L-methionine</name>
        <dbReference type="ChEBI" id="CHEBI:57844"/>
    </ligand>
</feature>
<feature type="binding site" evidence="1">
    <location>
        <position position="498"/>
    </location>
    <ligand>
        <name>L-homocysteine</name>
        <dbReference type="ChEBI" id="CHEBI:58199"/>
    </ligand>
</feature>
<feature type="binding site" evidence="1">
    <location>
        <position position="498"/>
    </location>
    <ligand>
        <name>L-methionine</name>
        <dbReference type="ChEBI" id="CHEBI:57844"/>
    </ligand>
</feature>
<feature type="binding site" evidence="1">
    <location>
        <begin position="529"/>
        <end position="530"/>
    </location>
    <ligand>
        <name>5-methyltetrahydropteroyltri-L-glutamate</name>
        <dbReference type="ChEBI" id="CHEBI:58207"/>
    </ligand>
</feature>
<feature type="binding site" evidence="1">
    <location>
        <position position="575"/>
    </location>
    <ligand>
        <name>5-methyltetrahydropteroyltri-L-glutamate</name>
        <dbReference type="ChEBI" id="CHEBI:58207"/>
    </ligand>
</feature>
<feature type="binding site" evidence="1">
    <location>
        <position position="613"/>
    </location>
    <ligand>
        <name>L-homocysteine</name>
        <dbReference type="ChEBI" id="CHEBI:58199"/>
    </ligand>
</feature>
<feature type="binding site" evidence="1">
    <location>
        <position position="613"/>
    </location>
    <ligand>
        <name>L-methionine</name>
        <dbReference type="ChEBI" id="CHEBI:57844"/>
    </ligand>
</feature>
<feature type="binding site" evidence="1">
    <location>
        <position position="619"/>
    </location>
    <ligand>
        <name>5-methyltetrahydropteroyltri-L-glutamate</name>
        <dbReference type="ChEBI" id="CHEBI:58207"/>
    </ligand>
</feature>
<feature type="binding site" evidence="1">
    <location>
        <position position="655"/>
    </location>
    <ligand>
        <name>Zn(2+)</name>
        <dbReference type="ChEBI" id="CHEBI:29105"/>
        <note>catalytic</note>
    </ligand>
</feature>
<feature type="binding site" evidence="1">
    <location>
        <position position="657"/>
    </location>
    <ligand>
        <name>Zn(2+)</name>
        <dbReference type="ChEBI" id="CHEBI:29105"/>
        <note>catalytic</note>
    </ligand>
</feature>
<feature type="binding site" evidence="1">
    <location>
        <position position="679"/>
    </location>
    <ligand>
        <name>Zn(2+)</name>
        <dbReference type="ChEBI" id="CHEBI:29105"/>
        <note>catalytic</note>
    </ligand>
</feature>
<feature type="binding site" evidence="1">
    <location>
        <position position="740"/>
    </location>
    <ligand>
        <name>Zn(2+)</name>
        <dbReference type="ChEBI" id="CHEBI:29105"/>
        <note>catalytic</note>
    </ligand>
</feature>
<gene>
    <name evidence="1" type="primary">metE</name>
    <name type="ordered locus">PSPTO_4179</name>
</gene>
<comment type="function">
    <text evidence="1">Catalyzes the transfer of a methyl group from 5-methyltetrahydrofolate to homocysteine resulting in methionine formation.</text>
</comment>
<comment type="catalytic activity">
    <reaction evidence="1">
        <text>5-methyltetrahydropteroyltri-L-glutamate + L-homocysteine = tetrahydropteroyltri-L-glutamate + L-methionine</text>
        <dbReference type="Rhea" id="RHEA:21196"/>
        <dbReference type="ChEBI" id="CHEBI:57844"/>
        <dbReference type="ChEBI" id="CHEBI:58140"/>
        <dbReference type="ChEBI" id="CHEBI:58199"/>
        <dbReference type="ChEBI" id="CHEBI:58207"/>
        <dbReference type="EC" id="2.1.1.14"/>
    </reaction>
</comment>
<comment type="cofactor">
    <cofactor evidence="1">
        <name>Zn(2+)</name>
        <dbReference type="ChEBI" id="CHEBI:29105"/>
    </cofactor>
    <text evidence="1">Binds 1 zinc ion per subunit.</text>
</comment>
<comment type="pathway">
    <text evidence="1">Amino-acid biosynthesis; L-methionine biosynthesis via de novo pathway; L-methionine from L-homocysteine (MetE route): step 1/1.</text>
</comment>
<comment type="similarity">
    <text evidence="1">Belongs to the vitamin-B12 independent methionine synthase family.</text>
</comment>
<evidence type="ECO:0000255" key="1">
    <source>
        <dbReference type="HAMAP-Rule" id="MF_00172"/>
    </source>
</evidence>
<keyword id="KW-0028">Amino-acid biosynthesis</keyword>
<keyword id="KW-0479">Metal-binding</keyword>
<keyword id="KW-0486">Methionine biosynthesis</keyword>
<keyword id="KW-0489">Methyltransferase</keyword>
<keyword id="KW-1185">Reference proteome</keyword>
<keyword id="KW-0677">Repeat</keyword>
<keyword id="KW-0808">Transferase</keyword>
<keyword id="KW-0862">Zinc</keyword>